<comment type="function">
    <text evidence="1">This protein catalyzes the committed step to the synthesis of the acidic phospholipids.</text>
</comment>
<comment type="catalytic activity">
    <reaction>
        <text>a CDP-1,2-diacyl-sn-glycerol + sn-glycerol 3-phosphate = a 1,2-diacyl-sn-glycero-3-phospho-(1'-sn-glycero-3'-phosphate) + CMP + H(+)</text>
        <dbReference type="Rhea" id="RHEA:12593"/>
        <dbReference type="ChEBI" id="CHEBI:15378"/>
        <dbReference type="ChEBI" id="CHEBI:57597"/>
        <dbReference type="ChEBI" id="CHEBI:58332"/>
        <dbReference type="ChEBI" id="CHEBI:60110"/>
        <dbReference type="ChEBI" id="CHEBI:60377"/>
        <dbReference type="EC" id="2.7.8.5"/>
    </reaction>
</comment>
<comment type="pathway">
    <text>Phospholipid metabolism; phosphatidylglycerol biosynthesis; phosphatidylglycerol from CDP-diacylglycerol: step 1/2.</text>
</comment>
<comment type="subcellular location">
    <subcellularLocation>
        <location evidence="1">Cell membrane</location>
        <topology evidence="1">Multi-pass membrane protein</topology>
    </subcellularLocation>
</comment>
<comment type="similarity">
    <text evidence="3">Belongs to the CDP-alcohol phosphatidyltransferase class-I family.</text>
</comment>
<name>PGSA_STAAC</name>
<feature type="chain" id="PRO_0000056784" description="CDP-diacylglycerol--glycerol-3-phosphate 3-phosphatidyltransferase">
    <location>
        <begin position="1"/>
        <end position="192"/>
    </location>
</feature>
<feature type="transmembrane region" description="Helical" evidence="2">
    <location>
        <begin position="7"/>
        <end position="29"/>
    </location>
</feature>
<feature type="transmembrane region" description="Helical" evidence="2">
    <location>
        <begin position="44"/>
        <end position="63"/>
    </location>
</feature>
<feature type="transmembrane region" description="Helical" evidence="2">
    <location>
        <begin position="84"/>
        <end position="106"/>
    </location>
</feature>
<feature type="transmembrane region" description="Helical" evidence="2">
    <location>
        <begin position="129"/>
        <end position="151"/>
    </location>
</feature>
<feature type="transmembrane region" description="Helical" evidence="2">
    <location>
        <begin position="157"/>
        <end position="179"/>
    </location>
</feature>
<gene>
    <name type="primary">pgsA</name>
    <name type="ordered locus">SACOL1302</name>
</gene>
<sequence length="192" mass="21014">MNIPNQITVFRVVLIPVFILFALVDFGFGNVSFLGGYEIRIELLISGFIFILASLSDFVDGYLARKWNLVTNMGKFLDPLADKLLVASALIVLVQLGLTNSVVAIIIIAREFAVTGLRLLQIEQGFVSAAGQLGKIKTAVTMVAITWLLLGDPLATLIGLSLGQILLYIGVIFTILSGIEYFYKGRDVFKQK</sequence>
<accession>Q5HGE8</accession>
<protein>
    <recommendedName>
        <fullName>CDP-diacylglycerol--glycerol-3-phosphate 3-phosphatidyltransferase</fullName>
        <ecNumber>2.7.8.5</ecNumber>
    </recommendedName>
    <alternativeName>
        <fullName>Phosphatidylglycerophosphate synthase</fullName>
        <shortName>PGP synthase</shortName>
    </alternativeName>
</protein>
<reference key="1">
    <citation type="journal article" date="2005" name="J. Bacteriol.">
        <title>Insights on evolution of virulence and resistance from the complete genome analysis of an early methicillin-resistant Staphylococcus aureus strain and a biofilm-producing methicillin-resistant Staphylococcus epidermidis strain.</title>
        <authorList>
            <person name="Gill S.R."/>
            <person name="Fouts D.E."/>
            <person name="Archer G.L."/>
            <person name="Mongodin E.F."/>
            <person name="DeBoy R.T."/>
            <person name="Ravel J."/>
            <person name="Paulsen I.T."/>
            <person name="Kolonay J.F."/>
            <person name="Brinkac L.M."/>
            <person name="Beanan M.J."/>
            <person name="Dodson R.J."/>
            <person name="Daugherty S.C."/>
            <person name="Madupu R."/>
            <person name="Angiuoli S.V."/>
            <person name="Durkin A.S."/>
            <person name="Haft D.H."/>
            <person name="Vamathevan J.J."/>
            <person name="Khouri H."/>
            <person name="Utterback T.R."/>
            <person name="Lee C."/>
            <person name="Dimitrov G."/>
            <person name="Jiang L."/>
            <person name="Qin H."/>
            <person name="Weidman J."/>
            <person name="Tran K."/>
            <person name="Kang K.H."/>
            <person name="Hance I.R."/>
            <person name="Nelson K.E."/>
            <person name="Fraser C.M."/>
        </authorList>
    </citation>
    <scope>NUCLEOTIDE SEQUENCE [LARGE SCALE GENOMIC DNA]</scope>
    <source>
        <strain>COL</strain>
    </source>
</reference>
<keyword id="KW-1003">Cell membrane</keyword>
<keyword id="KW-0444">Lipid biosynthesis</keyword>
<keyword id="KW-0443">Lipid metabolism</keyword>
<keyword id="KW-0472">Membrane</keyword>
<keyword id="KW-0594">Phospholipid biosynthesis</keyword>
<keyword id="KW-1208">Phospholipid metabolism</keyword>
<keyword id="KW-0808">Transferase</keyword>
<keyword id="KW-0812">Transmembrane</keyword>
<keyword id="KW-1133">Transmembrane helix</keyword>
<proteinExistence type="inferred from homology"/>
<evidence type="ECO:0000250" key="1"/>
<evidence type="ECO:0000255" key="2"/>
<evidence type="ECO:0000305" key="3"/>
<organism>
    <name type="scientific">Staphylococcus aureus (strain COL)</name>
    <dbReference type="NCBI Taxonomy" id="93062"/>
    <lineage>
        <taxon>Bacteria</taxon>
        <taxon>Bacillati</taxon>
        <taxon>Bacillota</taxon>
        <taxon>Bacilli</taxon>
        <taxon>Bacillales</taxon>
        <taxon>Staphylococcaceae</taxon>
        <taxon>Staphylococcus</taxon>
    </lineage>
</organism>
<dbReference type="EC" id="2.7.8.5"/>
<dbReference type="EMBL" id="CP000046">
    <property type="protein sequence ID" value="AAW38133.1"/>
    <property type="molecule type" value="Genomic_DNA"/>
</dbReference>
<dbReference type="RefSeq" id="WP_001025093.1">
    <property type="nucleotide sequence ID" value="NZ_JBGOFO010000002.1"/>
</dbReference>
<dbReference type="SMR" id="Q5HGE8"/>
<dbReference type="KEGG" id="sac:SACOL1302"/>
<dbReference type="HOGENOM" id="CLU_051314_2_3_9"/>
<dbReference type="UniPathway" id="UPA00084">
    <property type="reaction ID" value="UER00503"/>
</dbReference>
<dbReference type="Proteomes" id="UP000000530">
    <property type="component" value="Chromosome"/>
</dbReference>
<dbReference type="GO" id="GO:0005886">
    <property type="term" value="C:plasma membrane"/>
    <property type="evidence" value="ECO:0007669"/>
    <property type="project" value="UniProtKB-SubCell"/>
</dbReference>
<dbReference type="GO" id="GO:0008444">
    <property type="term" value="F:CDP-diacylglycerol-glycerol-3-phosphate 3-phosphatidyltransferase activity"/>
    <property type="evidence" value="ECO:0007669"/>
    <property type="project" value="UniProtKB-EC"/>
</dbReference>
<dbReference type="GO" id="GO:0006655">
    <property type="term" value="P:phosphatidylglycerol biosynthetic process"/>
    <property type="evidence" value="ECO:0007669"/>
    <property type="project" value="UniProtKB-UniPathway"/>
</dbReference>
<dbReference type="FunFam" id="1.20.120.1760:FF:000004">
    <property type="entry name" value="CDP-diacylglycerol--glycerol-3-phosphate 3-phosphatidyltransferase"/>
    <property type="match status" value="1"/>
</dbReference>
<dbReference type="Gene3D" id="1.20.120.1760">
    <property type="match status" value="1"/>
</dbReference>
<dbReference type="InterPro" id="IPR050324">
    <property type="entry name" value="CDP-alcohol_PTase-I"/>
</dbReference>
<dbReference type="InterPro" id="IPR000462">
    <property type="entry name" value="CDP-OH_P_trans"/>
</dbReference>
<dbReference type="InterPro" id="IPR043130">
    <property type="entry name" value="CDP-OH_PTrfase_TM_dom"/>
</dbReference>
<dbReference type="InterPro" id="IPR048254">
    <property type="entry name" value="CDP_ALCOHOL_P_TRANSF_CS"/>
</dbReference>
<dbReference type="InterPro" id="IPR004570">
    <property type="entry name" value="Phosphatidylglycerol_P_synth"/>
</dbReference>
<dbReference type="NCBIfam" id="TIGR00560">
    <property type="entry name" value="pgsA"/>
    <property type="match status" value="1"/>
</dbReference>
<dbReference type="PANTHER" id="PTHR14269:SF62">
    <property type="entry name" value="CDP-DIACYLGLYCEROL--GLYCEROL-3-PHOSPHATE 3-PHOSPHATIDYLTRANSFERASE 1, CHLOROPLASTIC"/>
    <property type="match status" value="1"/>
</dbReference>
<dbReference type="PANTHER" id="PTHR14269">
    <property type="entry name" value="CDP-DIACYLGLYCEROL--GLYCEROL-3-PHOSPHATE 3-PHOSPHATIDYLTRANSFERASE-RELATED"/>
    <property type="match status" value="1"/>
</dbReference>
<dbReference type="Pfam" id="PF01066">
    <property type="entry name" value="CDP-OH_P_transf"/>
    <property type="match status" value="1"/>
</dbReference>
<dbReference type="PIRSF" id="PIRSF000847">
    <property type="entry name" value="Phos_ph_gly_syn"/>
    <property type="match status" value="1"/>
</dbReference>
<dbReference type="PROSITE" id="PS00379">
    <property type="entry name" value="CDP_ALCOHOL_P_TRANSF"/>
    <property type="match status" value="1"/>
</dbReference>